<comment type="function">
    <text evidence="1">The UvrABC repair system catalyzes the recognition and processing of DNA lesions. UvrC both incises the 5' and 3' sides of the lesion. The N-terminal half is responsible for the 3' incision and the C-terminal half is responsible for the 5' incision.</text>
</comment>
<comment type="subunit">
    <text evidence="1">Interacts with UvrB in an incision complex.</text>
</comment>
<comment type="subcellular location">
    <subcellularLocation>
        <location evidence="1">Cytoplasm</location>
    </subcellularLocation>
</comment>
<comment type="similarity">
    <text evidence="1">Belongs to the UvrC family.</text>
</comment>
<feature type="chain" id="PRO_0000264864" description="UvrABC system protein C">
    <location>
        <begin position="1"/>
        <end position="707"/>
    </location>
</feature>
<feature type="domain" description="GIY-YIG" evidence="1">
    <location>
        <begin position="14"/>
        <end position="94"/>
    </location>
</feature>
<feature type="domain" description="UVR" evidence="1">
    <location>
        <begin position="206"/>
        <end position="241"/>
    </location>
</feature>
<feature type="region of interest" description="Disordered" evidence="2">
    <location>
        <begin position="654"/>
        <end position="684"/>
    </location>
</feature>
<feature type="compositionally biased region" description="Low complexity" evidence="2">
    <location>
        <begin position="658"/>
        <end position="684"/>
    </location>
</feature>
<protein>
    <recommendedName>
        <fullName evidence="1">UvrABC system protein C</fullName>
        <shortName evidence="1">Protein UvrC</shortName>
    </recommendedName>
    <alternativeName>
        <fullName evidence="1">Excinuclease ABC subunit C</fullName>
    </alternativeName>
</protein>
<name>UVRC_ANADE</name>
<sequence length="707" mass="78948">MDANLRRKLDELPAEPGCYLMKDRAGEVVYVGKASSLRSRVRSYFDAGRGDQRAFVALLDGLLGDLEVIVTRSEKEAVLLENELIKKHRPRFNVRLRDDKDFIVLKLDERHPYPRLEVRRAREKRQPGARYFGPYSSASSIRETLRMVNRHFQLRTCSDHVFDHRKRPCILYQIHRCPAPCVYEVPAEEYRQSVEDAVEFLEGREGELVERLRGRMAGAAEGLRFEEAARLRDQLQAVERSLEKQRVLMSDRGDRDVIGLYREGPDLVVQVLSMRAGKLQDAQAHPFREQEFPAEEILSSFLSLYYEHTDAPDEILVPLEPVQAEALADVLSERRGRRVRLLTPQRGAKADLLDVARRNAEQGFRAWHEHDERREQALASLAKALHLARPPRWMECYDISTFQGALAVGSGVSMKDGEPDKANYRRYKVKAVAGQDDFAMLHEVVTRRLRRALGEGQLPDLIVIDGGKGQLNAALAAAKDLGVPTRPSPGNPDAPFVELVGLAKSRLVDGPALGTARVVARRGRRAEARLADAAEAAEKGFVSELARSPERVFLPGRKDPVVLRQNSAELFLLARLRDEAHRFAITFHRKLRRERNFQSVLEEIPGIGEGRKRALLRHFGALRRVREATPEEIAQVEGFGPRQAAAVHAFFHRPDAPPAAADEPSGAPEGTPAGGPAEAIPDAAIAATEAEIDAALADEDASPEPAA</sequence>
<keyword id="KW-0963">Cytoplasm</keyword>
<keyword id="KW-0227">DNA damage</keyword>
<keyword id="KW-0228">DNA excision</keyword>
<keyword id="KW-0234">DNA repair</keyword>
<keyword id="KW-0267">Excision nuclease</keyword>
<keyword id="KW-1185">Reference proteome</keyword>
<keyword id="KW-0742">SOS response</keyword>
<evidence type="ECO:0000255" key="1">
    <source>
        <dbReference type="HAMAP-Rule" id="MF_00203"/>
    </source>
</evidence>
<evidence type="ECO:0000256" key="2">
    <source>
        <dbReference type="SAM" id="MobiDB-lite"/>
    </source>
</evidence>
<accession>Q2IQH0</accession>
<organism>
    <name type="scientific">Anaeromyxobacter dehalogenans (strain 2CP-C)</name>
    <dbReference type="NCBI Taxonomy" id="290397"/>
    <lineage>
        <taxon>Bacteria</taxon>
        <taxon>Pseudomonadati</taxon>
        <taxon>Myxococcota</taxon>
        <taxon>Myxococcia</taxon>
        <taxon>Myxococcales</taxon>
        <taxon>Cystobacterineae</taxon>
        <taxon>Anaeromyxobacteraceae</taxon>
        <taxon>Anaeromyxobacter</taxon>
    </lineage>
</organism>
<dbReference type="EMBL" id="CP000251">
    <property type="protein sequence ID" value="ABC81053.1"/>
    <property type="molecule type" value="Genomic_DNA"/>
</dbReference>
<dbReference type="RefSeq" id="WP_011420336.1">
    <property type="nucleotide sequence ID" value="NC_007760.1"/>
</dbReference>
<dbReference type="SMR" id="Q2IQH0"/>
<dbReference type="STRING" id="290397.Adeh_1279"/>
<dbReference type="KEGG" id="ade:Adeh_1279"/>
<dbReference type="eggNOG" id="COG0322">
    <property type="taxonomic scope" value="Bacteria"/>
</dbReference>
<dbReference type="HOGENOM" id="CLU_014841_3_2_7"/>
<dbReference type="OrthoDB" id="9804933at2"/>
<dbReference type="Proteomes" id="UP000001935">
    <property type="component" value="Chromosome"/>
</dbReference>
<dbReference type="GO" id="GO:0005737">
    <property type="term" value="C:cytoplasm"/>
    <property type="evidence" value="ECO:0007669"/>
    <property type="project" value="UniProtKB-SubCell"/>
</dbReference>
<dbReference type="GO" id="GO:0009380">
    <property type="term" value="C:excinuclease repair complex"/>
    <property type="evidence" value="ECO:0007669"/>
    <property type="project" value="InterPro"/>
</dbReference>
<dbReference type="GO" id="GO:0003677">
    <property type="term" value="F:DNA binding"/>
    <property type="evidence" value="ECO:0007669"/>
    <property type="project" value="UniProtKB-UniRule"/>
</dbReference>
<dbReference type="GO" id="GO:0009381">
    <property type="term" value="F:excinuclease ABC activity"/>
    <property type="evidence" value="ECO:0007669"/>
    <property type="project" value="UniProtKB-UniRule"/>
</dbReference>
<dbReference type="GO" id="GO:0006289">
    <property type="term" value="P:nucleotide-excision repair"/>
    <property type="evidence" value="ECO:0007669"/>
    <property type="project" value="UniProtKB-UniRule"/>
</dbReference>
<dbReference type="GO" id="GO:0009432">
    <property type="term" value="P:SOS response"/>
    <property type="evidence" value="ECO:0007669"/>
    <property type="project" value="UniProtKB-UniRule"/>
</dbReference>
<dbReference type="CDD" id="cd10434">
    <property type="entry name" value="GIY-YIG_UvrC_Cho"/>
    <property type="match status" value="1"/>
</dbReference>
<dbReference type="FunFam" id="3.40.1440.10:FF:000001">
    <property type="entry name" value="UvrABC system protein C"/>
    <property type="match status" value="1"/>
</dbReference>
<dbReference type="Gene3D" id="1.10.150.20">
    <property type="entry name" value="5' to 3' exonuclease, C-terminal subdomain"/>
    <property type="match status" value="1"/>
</dbReference>
<dbReference type="Gene3D" id="3.40.1440.10">
    <property type="entry name" value="GIY-YIG endonuclease"/>
    <property type="match status" value="1"/>
</dbReference>
<dbReference type="Gene3D" id="4.10.860.10">
    <property type="entry name" value="UVR domain"/>
    <property type="match status" value="1"/>
</dbReference>
<dbReference type="Gene3D" id="3.30.420.340">
    <property type="entry name" value="UvrC, RNAse H endonuclease domain"/>
    <property type="match status" value="1"/>
</dbReference>
<dbReference type="HAMAP" id="MF_00203">
    <property type="entry name" value="UvrC"/>
    <property type="match status" value="1"/>
</dbReference>
<dbReference type="InterPro" id="IPR041663">
    <property type="entry name" value="DisA/LigA_HHH"/>
</dbReference>
<dbReference type="InterPro" id="IPR000305">
    <property type="entry name" value="GIY-YIG_endonuc"/>
</dbReference>
<dbReference type="InterPro" id="IPR035901">
    <property type="entry name" value="GIY-YIG_endonuc_sf"/>
</dbReference>
<dbReference type="InterPro" id="IPR047296">
    <property type="entry name" value="GIY-YIG_UvrC_Cho"/>
</dbReference>
<dbReference type="InterPro" id="IPR003583">
    <property type="entry name" value="Hlx-hairpin-Hlx_DNA-bd_motif"/>
</dbReference>
<dbReference type="InterPro" id="IPR010994">
    <property type="entry name" value="RuvA_2-like"/>
</dbReference>
<dbReference type="InterPro" id="IPR001943">
    <property type="entry name" value="UVR_dom"/>
</dbReference>
<dbReference type="InterPro" id="IPR036876">
    <property type="entry name" value="UVR_dom_sf"/>
</dbReference>
<dbReference type="InterPro" id="IPR050066">
    <property type="entry name" value="UvrABC_protein_C"/>
</dbReference>
<dbReference type="InterPro" id="IPR004791">
    <property type="entry name" value="UvrC"/>
</dbReference>
<dbReference type="InterPro" id="IPR001162">
    <property type="entry name" value="UvrC_RNase_H_dom"/>
</dbReference>
<dbReference type="InterPro" id="IPR038476">
    <property type="entry name" value="UvrC_RNase_H_dom_sf"/>
</dbReference>
<dbReference type="NCBIfam" id="TIGR00194">
    <property type="entry name" value="uvrC"/>
    <property type="match status" value="1"/>
</dbReference>
<dbReference type="PANTHER" id="PTHR30562:SF1">
    <property type="entry name" value="UVRABC SYSTEM PROTEIN C"/>
    <property type="match status" value="1"/>
</dbReference>
<dbReference type="PANTHER" id="PTHR30562">
    <property type="entry name" value="UVRC/OXIDOREDUCTASE"/>
    <property type="match status" value="1"/>
</dbReference>
<dbReference type="Pfam" id="PF01541">
    <property type="entry name" value="GIY-YIG"/>
    <property type="match status" value="1"/>
</dbReference>
<dbReference type="Pfam" id="PF12826">
    <property type="entry name" value="HHH_2"/>
    <property type="match status" value="1"/>
</dbReference>
<dbReference type="Pfam" id="PF02151">
    <property type="entry name" value="UVR"/>
    <property type="match status" value="1"/>
</dbReference>
<dbReference type="Pfam" id="PF22920">
    <property type="entry name" value="UvrC_RNaseH"/>
    <property type="match status" value="1"/>
</dbReference>
<dbReference type="Pfam" id="PF08459">
    <property type="entry name" value="UvrC_RNaseH_dom"/>
    <property type="match status" value="1"/>
</dbReference>
<dbReference type="SMART" id="SM00465">
    <property type="entry name" value="GIYc"/>
    <property type="match status" value="1"/>
</dbReference>
<dbReference type="SMART" id="SM00278">
    <property type="entry name" value="HhH1"/>
    <property type="match status" value="2"/>
</dbReference>
<dbReference type="SUPFAM" id="SSF46600">
    <property type="entry name" value="C-terminal UvrC-binding domain of UvrB"/>
    <property type="match status" value="1"/>
</dbReference>
<dbReference type="SUPFAM" id="SSF82771">
    <property type="entry name" value="GIY-YIG endonuclease"/>
    <property type="match status" value="1"/>
</dbReference>
<dbReference type="SUPFAM" id="SSF47781">
    <property type="entry name" value="RuvA domain 2-like"/>
    <property type="match status" value="1"/>
</dbReference>
<dbReference type="PROSITE" id="PS50164">
    <property type="entry name" value="GIY_YIG"/>
    <property type="match status" value="1"/>
</dbReference>
<dbReference type="PROSITE" id="PS50151">
    <property type="entry name" value="UVR"/>
    <property type="match status" value="1"/>
</dbReference>
<dbReference type="PROSITE" id="PS50165">
    <property type="entry name" value="UVRC"/>
    <property type="match status" value="1"/>
</dbReference>
<reference key="1">
    <citation type="submission" date="2006-01" db="EMBL/GenBank/DDBJ databases">
        <title>Complete sequence of Anaeromyxobacter dehalogenans 2CP-C.</title>
        <authorList>
            <person name="Copeland A."/>
            <person name="Lucas S."/>
            <person name="Lapidus A."/>
            <person name="Barry K."/>
            <person name="Detter J.C."/>
            <person name="Glavina T."/>
            <person name="Hammon N."/>
            <person name="Israni S."/>
            <person name="Pitluck S."/>
            <person name="Brettin T."/>
            <person name="Bruce D."/>
            <person name="Han C."/>
            <person name="Tapia R."/>
            <person name="Gilna P."/>
            <person name="Kiss H."/>
            <person name="Schmutz J."/>
            <person name="Larimer F."/>
            <person name="Land M."/>
            <person name="Kyrpides N."/>
            <person name="Anderson I."/>
            <person name="Sanford R.A."/>
            <person name="Ritalahti K.M."/>
            <person name="Thomas H.S."/>
            <person name="Kirby J.R."/>
            <person name="Zhulin I.B."/>
            <person name="Loeffler F.E."/>
            <person name="Richardson P."/>
        </authorList>
    </citation>
    <scope>NUCLEOTIDE SEQUENCE [LARGE SCALE GENOMIC DNA]</scope>
    <source>
        <strain>2CP-C</strain>
    </source>
</reference>
<proteinExistence type="inferred from homology"/>
<gene>
    <name evidence="1" type="primary">uvrC</name>
    <name type="ordered locus">Adeh_1279</name>
</gene>